<keyword id="KW-1185">Reference proteome</keyword>
<name>YB121_YEAST</name>
<reference key="1">
    <citation type="journal article" date="1994" name="Yeast">
        <title>Analysis of a 70 kb region on the right arm of yeast chromosome II.</title>
        <authorList>
            <person name="Mannhaupt G."/>
            <person name="Stucka R."/>
            <person name="Ehnle S."/>
            <person name="Vetter I."/>
            <person name="Feldmann H."/>
        </authorList>
    </citation>
    <scope>NUCLEOTIDE SEQUENCE [GENOMIC DNA]</scope>
    <source>
        <strain>ATCC 204508 / S288c</strain>
    </source>
</reference>
<reference key="2">
    <citation type="journal article" date="1994" name="EMBO J.">
        <title>Complete DNA sequence of yeast chromosome II.</title>
        <authorList>
            <person name="Feldmann H."/>
            <person name="Aigle M."/>
            <person name="Aljinovic G."/>
            <person name="Andre B."/>
            <person name="Baclet M.C."/>
            <person name="Barthe C."/>
            <person name="Baur A."/>
            <person name="Becam A.-M."/>
            <person name="Biteau N."/>
            <person name="Boles E."/>
            <person name="Brandt T."/>
            <person name="Brendel M."/>
            <person name="Brueckner M."/>
            <person name="Bussereau F."/>
            <person name="Christiansen C."/>
            <person name="Contreras R."/>
            <person name="Crouzet M."/>
            <person name="Cziepluch C."/>
            <person name="Demolis N."/>
            <person name="Delaveau T."/>
            <person name="Doignon F."/>
            <person name="Domdey H."/>
            <person name="Duesterhus S."/>
            <person name="Dubois E."/>
            <person name="Dujon B."/>
            <person name="El Bakkoury M."/>
            <person name="Entian K.-D."/>
            <person name="Feuermann M."/>
            <person name="Fiers W."/>
            <person name="Fobo G.M."/>
            <person name="Fritz C."/>
            <person name="Gassenhuber J."/>
            <person name="Glansdorff N."/>
            <person name="Goffeau A."/>
            <person name="Grivell L.A."/>
            <person name="de Haan M."/>
            <person name="Hein C."/>
            <person name="Herbert C.J."/>
            <person name="Hollenberg C.P."/>
            <person name="Holmstroem K."/>
            <person name="Jacq C."/>
            <person name="Jacquet M."/>
            <person name="Jauniaux J.-C."/>
            <person name="Jonniaux J.-L."/>
            <person name="Kallesoee T."/>
            <person name="Kiesau P."/>
            <person name="Kirchrath L."/>
            <person name="Koetter P."/>
            <person name="Korol S."/>
            <person name="Liebl S."/>
            <person name="Logghe M."/>
            <person name="Lohan A.J.E."/>
            <person name="Louis E.J."/>
            <person name="Li Z.Y."/>
            <person name="Maat M.J."/>
            <person name="Mallet L."/>
            <person name="Mannhaupt G."/>
            <person name="Messenguy F."/>
            <person name="Miosga T."/>
            <person name="Molemans F."/>
            <person name="Mueller S."/>
            <person name="Nasr F."/>
            <person name="Obermaier B."/>
            <person name="Perea J."/>
            <person name="Pierard A."/>
            <person name="Piravandi E."/>
            <person name="Pohl F.M."/>
            <person name="Pohl T.M."/>
            <person name="Potier S."/>
            <person name="Proft M."/>
            <person name="Purnelle B."/>
            <person name="Ramezani Rad M."/>
            <person name="Rieger M."/>
            <person name="Rose M."/>
            <person name="Schaaff-Gerstenschlaeger I."/>
            <person name="Scherens B."/>
            <person name="Schwarzlose C."/>
            <person name="Skala J."/>
            <person name="Slonimski P.P."/>
            <person name="Smits P.H.M."/>
            <person name="Souciet J.-L."/>
            <person name="Steensma H.Y."/>
            <person name="Stucka R."/>
            <person name="Urrestarazu L.A."/>
            <person name="van der Aart Q.J.M."/>
            <person name="Van Dyck L."/>
            <person name="Vassarotti A."/>
            <person name="Vetter I."/>
            <person name="Vierendeels F."/>
            <person name="Vissers S."/>
            <person name="Wagner G."/>
            <person name="de Wergifosse P."/>
            <person name="Wolfe K.H."/>
            <person name="Zagulski M."/>
            <person name="Zimmermann F.K."/>
            <person name="Mewes H.-W."/>
            <person name="Kleine K."/>
        </authorList>
    </citation>
    <scope>NUCLEOTIDE SEQUENCE [LARGE SCALE GENOMIC DNA]</scope>
    <source>
        <strain>ATCC 204508 / S288c</strain>
    </source>
</reference>
<reference key="3">
    <citation type="journal article" date="2014" name="G3 (Bethesda)">
        <title>The reference genome sequence of Saccharomyces cerevisiae: Then and now.</title>
        <authorList>
            <person name="Engel S.R."/>
            <person name="Dietrich F.S."/>
            <person name="Fisk D.G."/>
            <person name="Binkley G."/>
            <person name="Balakrishnan R."/>
            <person name="Costanzo M.C."/>
            <person name="Dwight S.S."/>
            <person name="Hitz B.C."/>
            <person name="Karra K."/>
            <person name="Nash R.S."/>
            <person name="Weng S."/>
            <person name="Wong E.D."/>
            <person name="Lloyd P."/>
            <person name="Skrzypek M.S."/>
            <person name="Miyasato S.R."/>
            <person name="Simison M."/>
            <person name="Cherry J.M."/>
        </authorList>
    </citation>
    <scope>GENOME REANNOTATION</scope>
    <source>
        <strain>ATCC 204508 / S288c</strain>
    </source>
</reference>
<reference key="4">
    <citation type="journal article" date="2002" name="Genome Res.">
        <title>Parallel identification of new genes in Saccharomyces cerevisiae.</title>
        <authorList>
            <person name="Oshiro G."/>
            <person name="Wodicka L.M."/>
            <person name="Washburn M.P."/>
            <person name="Yates J.R. III"/>
            <person name="Lockhart D.J."/>
            <person name="Winzeler E.A."/>
        </authorList>
    </citation>
    <scope>IDENTIFICATION BY MASS SPECTROMETRY</scope>
</reference>
<feature type="chain" id="PRO_0000309012" description="Uncharacterized protein YBR121C-A">
    <location>
        <begin position="1"/>
        <end position="52"/>
    </location>
</feature>
<proteinExistence type="evidence at protein level"/>
<accession>P0C5L4</accession>
<sequence>MKSKTSSFPFCLVMFKKLVLLNQLSRQLVKQLLQEWSIMKLWVTLLPEFTNF</sequence>
<protein>
    <recommendedName>
        <fullName>Uncharacterized protein YBR121C-A</fullName>
    </recommendedName>
</protein>
<organism>
    <name type="scientific">Saccharomyces cerevisiae (strain ATCC 204508 / S288c)</name>
    <name type="common">Baker's yeast</name>
    <dbReference type="NCBI Taxonomy" id="559292"/>
    <lineage>
        <taxon>Eukaryota</taxon>
        <taxon>Fungi</taxon>
        <taxon>Dikarya</taxon>
        <taxon>Ascomycota</taxon>
        <taxon>Saccharomycotina</taxon>
        <taxon>Saccharomycetes</taxon>
        <taxon>Saccharomycetales</taxon>
        <taxon>Saccharomycetaceae</taxon>
        <taxon>Saccharomyces</taxon>
    </lineage>
</organism>
<dbReference type="EMBL" id="X78993">
    <property type="status" value="NOT_ANNOTATED_CDS"/>
    <property type="molecule type" value="Genomic_DNA"/>
</dbReference>
<dbReference type="EMBL" id="Z35990">
    <property type="status" value="NOT_ANNOTATED_CDS"/>
    <property type="molecule type" value="Genomic_DNA"/>
</dbReference>
<dbReference type="EMBL" id="BK006936">
    <property type="status" value="NOT_ANNOTATED_CDS"/>
    <property type="molecule type" value="Genomic_DNA"/>
</dbReference>
<dbReference type="SMR" id="P0C5L4"/>
<dbReference type="STRING" id="4932.YBR121C-A"/>
<dbReference type="PaxDb" id="4932-YBR121C-A"/>
<dbReference type="EnsemblFungi" id="YBR121C-A_mRNA">
    <property type="protein sequence ID" value="YBR121C-A"/>
    <property type="gene ID" value="YBR121C-A"/>
</dbReference>
<dbReference type="AGR" id="SGD:S000028815"/>
<dbReference type="SGD" id="S000028815">
    <property type="gene designation" value="YBR121C-A"/>
</dbReference>
<dbReference type="HOGENOM" id="CLU_3089068_0_0_1"/>
<dbReference type="InParanoid" id="P0C5L4"/>
<dbReference type="PRO" id="PR:P0C5L4"/>
<dbReference type="Proteomes" id="UP000002311">
    <property type="component" value="Chromosome II"/>
</dbReference>
<dbReference type="RNAct" id="P0C5L4">
    <property type="molecule type" value="protein"/>
</dbReference>
<gene>
    <name type="ordered locus">YBR121C-A</name>
</gene>